<organism>
    <name type="scientific">Homo sapiens</name>
    <name type="common">Human</name>
    <dbReference type="NCBI Taxonomy" id="9606"/>
    <lineage>
        <taxon>Eukaryota</taxon>
        <taxon>Metazoa</taxon>
        <taxon>Chordata</taxon>
        <taxon>Craniata</taxon>
        <taxon>Vertebrata</taxon>
        <taxon>Euteleostomi</taxon>
        <taxon>Mammalia</taxon>
        <taxon>Eutheria</taxon>
        <taxon>Euarchontoglires</taxon>
        <taxon>Primates</taxon>
        <taxon>Haplorrhini</taxon>
        <taxon>Catarrhini</taxon>
        <taxon>Hominidae</taxon>
        <taxon>Homo</taxon>
    </lineage>
</organism>
<comment type="interaction">
    <interactant intactId="EBI-9478422">
        <id>Q96G42</id>
    </interactant>
    <interactant intactId="EBI-2809489">
        <id>Q9NQ94</id>
        <label>A1CF</label>
    </interactant>
    <organismsDiffer>false</organismsDiffer>
    <experiments>3</experiments>
</comment>
<comment type="interaction">
    <interactant intactId="EBI-9478422">
        <id>Q96G42</id>
    </interactant>
    <interactant intactId="EBI-711810">
        <id>O14503</id>
        <label>BHLHE40</label>
    </interactant>
    <organismsDiffer>false</organismsDiffer>
    <experiments>3</experiments>
</comment>
<comment type="interaction">
    <interactant intactId="EBI-9478422">
        <id>Q96G42</id>
    </interactant>
    <interactant intactId="EBI-740376">
        <id>Q86UW9</id>
        <label>DTX2</label>
    </interactant>
    <organismsDiffer>false</organismsDiffer>
    <experiments>3</experiments>
</comment>
<comment type="interaction">
    <interactant intactId="EBI-9478422">
        <id>Q96G42</id>
    </interactant>
    <interactant intactId="EBI-10213520">
        <id>Q6NXG1</id>
        <label>ESRP1</label>
    </interactant>
    <organismsDiffer>false</organismsDiffer>
    <experiments>3</experiments>
</comment>
<comment type="interaction">
    <interactant intactId="EBI-9478422">
        <id>Q96G42</id>
    </interactant>
    <interactant intactId="EBI-10242151">
        <id>Q53EP0-3</id>
        <label>FNDC3B</label>
    </interactant>
    <organismsDiffer>false</organismsDiffer>
    <experiments>3</experiments>
</comment>
<comment type="interaction">
    <interactant intactId="EBI-9478422">
        <id>Q96G42</id>
    </interactant>
    <interactant intactId="EBI-1018153">
        <id>Q9BUJ2</id>
        <label>HNRNPUL1</label>
    </interactant>
    <organismsDiffer>false</organismsDiffer>
    <experiments>3</experiments>
</comment>
<comment type="interaction">
    <interactant intactId="EBI-9478422">
        <id>Q96G42</id>
    </interactant>
    <interactant intactId="EBI-10196832">
        <id>P0CW20</id>
        <label>LIMS4</label>
    </interactant>
    <organismsDiffer>false</organismsDiffer>
    <experiments>3</experiments>
</comment>
<comment type="interaction">
    <interactant intactId="EBI-9478422">
        <id>Q96G42</id>
    </interactant>
    <interactant intactId="EBI-726739">
        <id>Q9UPY8</id>
        <label>MAPRE3</label>
    </interactant>
    <organismsDiffer>false</organismsDiffer>
    <experiments>3</experiments>
</comment>
<comment type="interaction">
    <interactant intactId="EBI-9478422">
        <id>Q96G42</id>
    </interactant>
    <interactant intactId="EBI-11956831">
        <id>Q13952-2</id>
        <label>NFYC</label>
    </interactant>
    <organismsDiffer>false</organismsDiffer>
    <experiments>3</experiments>
</comment>
<comment type="interaction">
    <interactant intactId="EBI-9478422">
        <id>Q96G42</id>
    </interactant>
    <interactant intactId="EBI-11022007">
        <id>Q9HBE1-4</id>
        <label>PATZ1</label>
    </interactant>
    <organismsDiffer>false</organismsDiffer>
    <experiments>3</experiments>
</comment>
<comment type="interaction">
    <interactant intactId="EBI-9478422">
        <id>Q96G42</id>
    </interactant>
    <interactant intactId="EBI-14568740">
        <id>B7ZLY0</id>
        <label>PHC2</label>
    </interactant>
    <organismsDiffer>false</organismsDiffer>
    <experiments>3</experiments>
</comment>
<comment type="interaction">
    <interactant intactId="EBI-9478422">
        <id>Q96G42</id>
    </interactant>
    <interactant intactId="EBI-1389308">
        <id>Q7Z3K3</id>
        <label>POGZ</label>
    </interactant>
    <organismsDiffer>false</organismsDiffer>
    <experiments>3</experiments>
</comment>
<comment type="interaction">
    <interactant intactId="EBI-9478422">
        <id>Q96G42</id>
    </interactant>
    <interactant intactId="EBI-2798044">
        <id>Q2TAL8</id>
        <label>QRICH1</label>
    </interactant>
    <organismsDiffer>false</organismsDiffer>
    <experiments>3</experiments>
</comment>
<comment type="interaction">
    <interactant intactId="EBI-9478422">
        <id>Q96G42</id>
    </interactant>
    <interactant intactId="EBI-740343">
        <id>Q93062-3</id>
        <label>RBPMS</label>
    </interactant>
    <organismsDiffer>false</organismsDiffer>
    <experiments>3</experiments>
</comment>
<comment type="interaction">
    <interactant intactId="EBI-9478422">
        <id>Q96G42</id>
    </interactant>
    <interactant intactId="EBI-11987469">
        <id>Q6ZRY4</id>
        <label>RBPMS2</label>
    </interactant>
    <organismsDiffer>false</organismsDiffer>
    <experiments>3</experiments>
</comment>
<comment type="interaction">
    <interactant intactId="EBI-9478422">
        <id>Q96G42</id>
    </interactant>
    <interactant intactId="EBI-372094">
        <id>Q9BQY4</id>
        <label>RHOXF2</label>
    </interactant>
    <organismsDiffer>false</organismsDiffer>
    <experiments>3</experiments>
</comment>
<comment type="interaction">
    <interactant intactId="EBI-9478422">
        <id>Q96G42</id>
    </interactant>
    <interactant intactId="EBI-12275818">
        <id>Q53HV7-2</id>
        <label>SMUG1</label>
    </interactant>
    <organismsDiffer>false</organismsDiffer>
    <experiments>3</experiments>
</comment>
<comment type="interaction">
    <interactant intactId="EBI-9478422">
        <id>Q96G42</id>
    </interactant>
    <interactant intactId="EBI-743976">
        <id>Q96LM6</id>
        <label>SPMIP9</label>
    </interactant>
    <organismsDiffer>false</organismsDiffer>
    <experiments>3</experiments>
</comment>
<comment type="interaction">
    <interactant intactId="EBI-9478422">
        <id>Q96G42</id>
    </interactant>
    <interactant intactId="EBI-2824328">
        <id>O95947</id>
        <label>TBX6</label>
    </interactant>
    <organismsDiffer>false</organismsDiffer>
    <experiments>3</experiments>
</comment>
<comment type="interaction">
    <interactant intactId="EBI-9478422">
        <id>Q96G42</id>
    </interactant>
    <interactant intactId="EBI-11741437">
        <id>Q08117-2</id>
        <label>TLE5</label>
    </interactant>
    <organismsDiffer>false</organismsDiffer>
    <experiments>3</experiments>
</comment>
<comment type="interaction">
    <interactant intactId="EBI-9478422">
        <id>Q96G42</id>
    </interactant>
    <interactant intactId="EBI-396540">
        <id>Q12888</id>
        <label>TP53BP1</label>
    </interactant>
    <organismsDiffer>false</organismsDiffer>
    <experiments>3</experiments>
</comment>
<comment type="interaction">
    <interactant intactId="EBI-9478422">
        <id>Q96G42</id>
    </interactant>
    <interactant intactId="EBI-12040603">
        <id>Q9NZC7-5</id>
        <label>WWOX</label>
    </interactant>
    <organismsDiffer>false</organismsDiffer>
    <experiments>3</experiments>
</comment>
<comment type="interaction">
    <interactant intactId="EBI-9478422">
        <id>Q96G42</id>
    </interactant>
    <interactant intactId="EBI-742550">
        <id>Q96K80</id>
        <label>ZC3H10</label>
    </interactant>
    <organismsDiffer>false</organismsDiffer>
    <experiments>3</experiments>
</comment>
<comment type="caution">
    <text evidence="2">It is uncertain whether Met-1 or Met-100 is the initiator.</text>
</comment>
<comment type="sequence caution" evidence="2">
    <conflict type="erroneous initiation">
        <sequence resource="EMBL-CDS" id="AAH09980"/>
    </conflict>
    <text>Truncated N-terminus.</text>
</comment>
<name>KLD7B_HUMAN</name>
<reference key="1">
    <citation type="journal article" date="1999" name="Nature">
        <title>The DNA sequence of human chromosome 22.</title>
        <authorList>
            <person name="Dunham I."/>
            <person name="Hunt A.R."/>
            <person name="Collins J.E."/>
            <person name="Bruskiewich R."/>
            <person name="Beare D.M."/>
            <person name="Clamp M."/>
            <person name="Smink L.J."/>
            <person name="Ainscough R."/>
            <person name="Almeida J.P."/>
            <person name="Babbage A.K."/>
            <person name="Bagguley C."/>
            <person name="Bailey J."/>
            <person name="Barlow K.F."/>
            <person name="Bates K.N."/>
            <person name="Beasley O.P."/>
            <person name="Bird C.P."/>
            <person name="Blakey S.E."/>
            <person name="Bridgeman A.M."/>
            <person name="Buck D."/>
            <person name="Burgess J."/>
            <person name="Burrill W.D."/>
            <person name="Burton J."/>
            <person name="Carder C."/>
            <person name="Carter N.P."/>
            <person name="Chen Y."/>
            <person name="Clark G."/>
            <person name="Clegg S.M."/>
            <person name="Cobley V.E."/>
            <person name="Cole C.G."/>
            <person name="Collier R.E."/>
            <person name="Connor R."/>
            <person name="Conroy D."/>
            <person name="Corby N.R."/>
            <person name="Coville G.J."/>
            <person name="Cox A.V."/>
            <person name="Davis J."/>
            <person name="Dawson E."/>
            <person name="Dhami P.D."/>
            <person name="Dockree C."/>
            <person name="Dodsworth S.J."/>
            <person name="Durbin R.M."/>
            <person name="Ellington A.G."/>
            <person name="Evans K.L."/>
            <person name="Fey J.M."/>
            <person name="Fleming K."/>
            <person name="French L."/>
            <person name="Garner A.A."/>
            <person name="Gilbert J.G.R."/>
            <person name="Goward M.E."/>
            <person name="Grafham D.V."/>
            <person name="Griffiths M.N.D."/>
            <person name="Hall C."/>
            <person name="Hall R.E."/>
            <person name="Hall-Tamlyn G."/>
            <person name="Heathcott R.W."/>
            <person name="Ho S."/>
            <person name="Holmes S."/>
            <person name="Hunt S.E."/>
            <person name="Jones M.C."/>
            <person name="Kershaw J."/>
            <person name="Kimberley A.M."/>
            <person name="King A."/>
            <person name="Laird G.K."/>
            <person name="Langford C.F."/>
            <person name="Leversha M.A."/>
            <person name="Lloyd C."/>
            <person name="Lloyd D.M."/>
            <person name="Martyn I.D."/>
            <person name="Mashreghi-Mohammadi M."/>
            <person name="Matthews L.H."/>
            <person name="Mccann O.T."/>
            <person name="Mcclay J."/>
            <person name="Mclaren S."/>
            <person name="McMurray A.A."/>
            <person name="Milne S.A."/>
            <person name="Mortimore B.J."/>
            <person name="Odell C.N."/>
            <person name="Pavitt R."/>
            <person name="Pearce A.V."/>
            <person name="Pearson D."/>
            <person name="Phillimore B.J.C.T."/>
            <person name="Phillips S.H."/>
            <person name="Plumb R.W."/>
            <person name="Ramsay H."/>
            <person name="Ramsey Y."/>
            <person name="Rogers L."/>
            <person name="Ross M.T."/>
            <person name="Scott C.E."/>
            <person name="Sehra H.K."/>
            <person name="Skuce C.D."/>
            <person name="Smalley S."/>
            <person name="Smith M.L."/>
            <person name="Soderlund C."/>
            <person name="Spragon L."/>
            <person name="Steward C.A."/>
            <person name="Sulston J.E."/>
            <person name="Swann R.M."/>
            <person name="Vaudin M."/>
            <person name="Wall M."/>
            <person name="Wallis J.M."/>
            <person name="Whiteley M.N."/>
            <person name="Willey D.L."/>
            <person name="Williams L."/>
            <person name="Williams S.A."/>
            <person name="Williamson H."/>
            <person name="Wilmer T.E."/>
            <person name="Wilming L."/>
            <person name="Wright C.L."/>
            <person name="Hubbard T."/>
            <person name="Bentley D.R."/>
            <person name="Beck S."/>
            <person name="Rogers J."/>
            <person name="Shimizu N."/>
            <person name="Minoshima S."/>
            <person name="Kawasaki K."/>
            <person name="Sasaki T."/>
            <person name="Asakawa S."/>
            <person name="Kudoh J."/>
            <person name="Shintani A."/>
            <person name="Shibuya K."/>
            <person name="Yoshizaki Y."/>
            <person name="Aoki N."/>
            <person name="Mitsuyama S."/>
            <person name="Roe B.A."/>
            <person name="Chen F."/>
            <person name="Chu L."/>
            <person name="Crabtree J."/>
            <person name="Deschamps S."/>
            <person name="Do A."/>
            <person name="Do T."/>
            <person name="Dorman A."/>
            <person name="Fang F."/>
            <person name="Fu Y."/>
            <person name="Hu P."/>
            <person name="Hua A."/>
            <person name="Kenton S."/>
            <person name="Lai H."/>
            <person name="Lao H.I."/>
            <person name="Lewis J."/>
            <person name="Lewis S."/>
            <person name="Lin S.-P."/>
            <person name="Loh P."/>
            <person name="Malaj E."/>
            <person name="Nguyen T."/>
            <person name="Pan H."/>
            <person name="Phan S."/>
            <person name="Qi S."/>
            <person name="Qian Y."/>
            <person name="Ray L."/>
            <person name="Ren Q."/>
            <person name="Shaull S."/>
            <person name="Sloan D."/>
            <person name="Song L."/>
            <person name="Wang Q."/>
            <person name="Wang Y."/>
            <person name="Wang Z."/>
            <person name="White J."/>
            <person name="Willingham D."/>
            <person name="Wu H."/>
            <person name="Yao Z."/>
            <person name="Zhan M."/>
            <person name="Zhang G."/>
            <person name="Chissoe S."/>
            <person name="Murray J."/>
            <person name="Miller N."/>
            <person name="Minx P."/>
            <person name="Fulton R."/>
            <person name="Johnson D."/>
            <person name="Bemis G."/>
            <person name="Bentley D."/>
            <person name="Bradshaw H."/>
            <person name="Bourne S."/>
            <person name="Cordes M."/>
            <person name="Du Z."/>
            <person name="Fulton L."/>
            <person name="Goela D."/>
            <person name="Graves T."/>
            <person name="Hawkins J."/>
            <person name="Hinds K."/>
            <person name="Kemp K."/>
            <person name="Latreille P."/>
            <person name="Layman D."/>
            <person name="Ozersky P."/>
            <person name="Rohlfing T."/>
            <person name="Scheet P."/>
            <person name="Walker C."/>
            <person name="Wamsley A."/>
            <person name="Wohldmann P."/>
            <person name="Pepin K."/>
            <person name="Nelson J."/>
            <person name="Korf I."/>
            <person name="Bedell J.A."/>
            <person name="Hillier L.W."/>
            <person name="Mardis E."/>
            <person name="Waterston R."/>
            <person name="Wilson R."/>
            <person name="Emanuel B.S."/>
            <person name="Shaikh T."/>
            <person name="Kurahashi H."/>
            <person name="Saitta S."/>
            <person name="Budarf M.L."/>
            <person name="McDermid H.E."/>
            <person name="Johnson A."/>
            <person name="Wong A.C.C."/>
            <person name="Morrow B.E."/>
            <person name="Edelmann L."/>
            <person name="Kim U.J."/>
            <person name="Shizuya H."/>
            <person name="Simon M.I."/>
            <person name="Dumanski J.P."/>
            <person name="Peyrard M."/>
            <person name="Kedra D."/>
            <person name="Seroussi E."/>
            <person name="Fransson I."/>
            <person name="Tapia I."/>
            <person name="Bruder C.E."/>
            <person name="O'Brien K.P."/>
            <person name="Wilkinson P."/>
            <person name="Bodenteich A."/>
            <person name="Hartman K."/>
            <person name="Hu X."/>
            <person name="Khan A.S."/>
            <person name="Lane L."/>
            <person name="Tilahun Y."/>
            <person name="Wright H."/>
        </authorList>
    </citation>
    <scope>NUCLEOTIDE SEQUENCE [LARGE SCALE GENOMIC DNA]</scope>
</reference>
<reference key="2">
    <citation type="journal article" date="2004" name="Genome Res.">
        <title>The status, quality, and expansion of the NIH full-length cDNA project: the Mammalian Gene Collection (MGC).</title>
        <authorList>
            <consortium name="The MGC Project Team"/>
        </authorList>
    </citation>
    <scope>NUCLEOTIDE SEQUENCE [LARGE SCALE MRNA]</scope>
    <source>
        <tissue>Muscle</tissue>
    </source>
</reference>
<gene>
    <name type="primary">KLHDC7B</name>
</gene>
<dbReference type="EMBL" id="U62317">
    <property type="status" value="NOT_ANNOTATED_CDS"/>
    <property type="molecule type" value="Genomic_DNA"/>
</dbReference>
<dbReference type="EMBL" id="BC009980">
    <property type="protein sequence ID" value="AAH09980.1"/>
    <property type="status" value="ALT_INIT"/>
    <property type="molecule type" value="mRNA"/>
</dbReference>
<dbReference type="RefSeq" id="NP_612442.2">
    <property type="nucleotide sequence ID" value="NM_138433.3"/>
</dbReference>
<dbReference type="SMR" id="Q96G42"/>
<dbReference type="BioGRID" id="125257">
    <property type="interactions" value="27"/>
</dbReference>
<dbReference type="FunCoup" id="Q96G42">
    <property type="interactions" value="12"/>
</dbReference>
<dbReference type="IntAct" id="Q96G42">
    <property type="interactions" value="26"/>
</dbReference>
<dbReference type="MINT" id="Q96G42"/>
<dbReference type="STRING" id="9606.ENSP00000497256"/>
<dbReference type="GlyGen" id="Q96G42">
    <property type="glycosylation" value="1 site, 1 O-linked glycan (1 site)"/>
</dbReference>
<dbReference type="iPTMnet" id="Q96G42"/>
<dbReference type="PhosphoSitePlus" id="Q96G42"/>
<dbReference type="BioMuta" id="KLHDC7B"/>
<dbReference type="DMDM" id="296434567"/>
<dbReference type="jPOST" id="Q96G42"/>
<dbReference type="MassIVE" id="Q96G42"/>
<dbReference type="PaxDb" id="9606-ENSP00000379034"/>
<dbReference type="PeptideAtlas" id="Q96G42"/>
<dbReference type="ProteomicsDB" id="76592"/>
<dbReference type="Antibodypedia" id="237">
    <property type="antibodies" value="77 antibodies from 15 providers"/>
</dbReference>
<dbReference type="DNASU" id="113730"/>
<dbReference type="Ensembl" id="ENST00000395676.4">
    <property type="protein sequence ID" value="ENSP00000379034.2"/>
    <property type="gene ID" value="ENSG00000130487.9"/>
</dbReference>
<dbReference type="GeneID" id="113730"/>
<dbReference type="KEGG" id="hsa:113730"/>
<dbReference type="UCSC" id="uc003bmi.3">
    <property type="organism name" value="human"/>
</dbReference>
<dbReference type="AGR" id="HGNC:25145"/>
<dbReference type="CTD" id="113730"/>
<dbReference type="DisGeNET" id="113730"/>
<dbReference type="GeneCards" id="KLHDC7B"/>
<dbReference type="HGNC" id="HGNC:25145">
    <property type="gene designation" value="KLHDC7B"/>
</dbReference>
<dbReference type="HPA" id="ENSG00000130487">
    <property type="expression patterns" value="Tissue enhanced (lymphoid tissue, parathyroid gland)"/>
</dbReference>
<dbReference type="MIM" id="620521">
    <property type="type" value="gene"/>
</dbReference>
<dbReference type="neXtProt" id="NX_Q96G42"/>
<dbReference type="OpenTargets" id="ENSG00000130487"/>
<dbReference type="PharmGKB" id="PA142671582"/>
<dbReference type="VEuPathDB" id="HostDB:ENSG00000130487"/>
<dbReference type="eggNOG" id="KOG1072">
    <property type="taxonomic scope" value="Eukaryota"/>
</dbReference>
<dbReference type="GeneTree" id="ENSGT00940000163480"/>
<dbReference type="HOGENOM" id="CLU_020313_0_0_1"/>
<dbReference type="InParanoid" id="Q96G42"/>
<dbReference type="OMA" id="CKARSKY"/>
<dbReference type="OrthoDB" id="45365at2759"/>
<dbReference type="PAN-GO" id="Q96G42">
    <property type="GO annotations" value="0 GO annotations based on evolutionary models"/>
</dbReference>
<dbReference type="PhylomeDB" id="Q96G42"/>
<dbReference type="TreeFam" id="TF328485"/>
<dbReference type="PathwayCommons" id="Q96G42"/>
<dbReference type="SignaLink" id="Q96G42"/>
<dbReference type="BioGRID-ORCS" id="113730">
    <property type="hits" value="10 hits in 1151 CRISPR screens"/>
</dbReference>
<dbReference type="ChiTaRS" id="KLHDC7B">
    <property type="organism name" value="human"/>
</dbReference>
<dbReference type="GenomeRNAi" id="113730"/>
<dbReference type="Pharos" id="Q96G42">
    <property type="development level" value="Tbio"/>
</dbReference>
<dbReference type="PRO" id="PR:Q96G42"/>
<dbReference type="Proteomes" id="UP000005640">
    <property type="component" value="Chromosome 22"/>
</dbReference>
<dbReference type="RNAct" id="Q96G42">
    <property type="molecule type" value="protein"/>
</dbReference>
<dbReference type="Bgee" id="ENSG00000130487">
    <property type="expression patterns" value="Expressed in palpebral conjunctiva and 86 other cell types or tissues"/>
</dbReference>
<dbReference type="ExpressionAtlas" id="Q96G42">
    <property type="expression patterns" value="baseline and differential"/>
</dbReference>
<dbReference type="CDD" id="cd18484">
    <property type="entry name" value="BACK_KBTBD11_CMLAP"/>
    <property type="match status" value="1"/>
</dbReference>
<dbReference type="Gene3D" id="2.120.10.80">
    <property type="entry name" value="Kelch-type beta propeller"/>
    <property type="match status" value="1"/>
</dbReference>
<dbReference type="InterPro" id="IPR015915">
    <property type="entry name" value="Kelch-typ_b-propeller"/>
</dbReference>
<dbReference type="InterPro" id="IPR052310">
    <property type="entry name" value="Kelch/BTB_domain_protein"/>
</dbReference>
<dbReference type="InterPro" id="IPR006652">
    <property type="entry name" value="Kelch_1"/>
</dbReference>
<dbReference type="PANTHER" id="PTHR45972">
    <property type="entry name" value="BTB_2 DOMAIN-CONTAINING PROTEIN"/>
    <property type="match status" value="1"/>
</dbReference>
<dbReference type="PANTHER" id="PTHR45972:SF5">
    <property type="entry name" value="KELCH DOMAIN-CONTAINING PROTEIN 7B"/>
    <property type="match status" value="1"/>
</dbReference>
<dbReference type="Pfam" id="PF01344">
    <property type="entry name" value="Kelch_1"/>
    <property type="match status" value="2"/>
</dbReference>
<dbReference type="SMART" id="SM00612">
    <property type="entry name" value="Kelch"/>
    <property type="match status" value="3"/>
</dbReference>
<dbReference type="SUPFAM" id="SSF117281">
    <property type="entry name" value="Kelch motif"/>
    <property type="match status" value="1"/>
</dbReference>
<protein>
    <recommendedName>
        <fullName>Kelch domain-containing protein 7B</fullName>
    </recommendedName>
</protein>
<feature type="chain" id="PRO_0000229000" description="Kelch domain-containing protein 7B">
    <location>
        <begin position="1"/>
        <end position="594"/>
    </location>
</feature>
<feature type="repeat" description="Kelch 1">
    <location>
        <begin position="306"/>
        <end position="354"/>
    </location>
</feature>
<feature type="repeat" description="Kelch 2">
    <location>
        <begin position="355"/>
        <end position="405"/>
    </location>
</feature>
<feature type="repeat" description="Kelch 3">
    <location>
        <begin position="406"/>
        <end position="448"/>
    </location>
</feature>
<feature type="repeat" description="Kelch 4">
    <location>
        <begin position="451"/>
        <end position="493"/>
    </location>
</feature>
<feature type="repeat" description="Kelch 5">
    <location>
        <begin position="495"/>
        <end position="538"/>
    </location>
</feature>
<feature type="region of interest" description="Disordered" evidence="1">
    <location>
        <begin position="1"/>
        <end position="174"/>
    </location>
</feature>
<feature type="compositionally biased region" description="Gly residues" evidence="1">
    <location>
        <begin position="49"/>
        <end position="58"/>
    </location>
</feature>
<feature type="compositionally biased region" description="Polar residues" evidence="1">
    <location>
        <begin position="64"/>
        <end position="74"/>
    </location>
</feature>
<feature type="compositionally biased region" description="Pro residues" evidence="1">
    <location>
        <begin position="104"/>
        <end position="115"/>
    </location>
</feature>
<feature type="compositionally biased region" description="Low complexity" evidence="1">
    <location>
        <begin position="116"/>
        <end position="126"/>
    </location>
</feature>
<sequence>MVLRSHPFPRQDRPQGSVPRAVPGSPVGPSTSTHSEDRHGPSSSVGTVIGTGTGGLVEAGGQPQPRSSETNGSPSPDPPPGLRGEGTREKSLDPLPQAAMPRGPAQPPAQRPPGPAASSSARRSQPVPQLRKRSRCEIAPSSEQEVRPAASGDPQGEAPGEGGSPAGRSGALTEKQEEARKLMVFLQRPGGWGVVEGPRKPSSRALEPATAAALRRRLDLGSCLDVLAFAQQHGEPGLAQETYALMSDNLLRVLGDPCLYRRLSAADRERILSLRTGRGRAVLGVLVLPSLYQGGRSGLPRGPRGEEPPAAAPVSLPLPAHLHVFNPRENTWRPLTQVPEEAPLRGCGLCTMHNYLFLAGGIRGSGAKAVCSNEVFCYNPLTNIWSQVRPMQQARAQLKLVALDGLLYAIGGECLYSMECYDPRTDAWTPRAPLPAGTFPVAHEAVACRGDIYVTGGHLFYRLLRYSPVKDAWDECPYSASHRRSSDIVALGGFLYRFDLLRGVGAAVMRYNTVTGSWSRAASLPLPAPAPLHCTTLGNTIYCLNPQVTATFTVSGGTAQFQAKELQPFPLGSTGVLSPFILTLPPEDRLQTSL</sequence>
<keyword id="KW-0880">Kelch repeat</keyword>
<keyword id="KW-1267">Proteomics identification</keyword>
<keyword id="KW-1185">Reference proteome</keyword>
<keyword id="KW-0677">Repeat</keyword>
<evidence type="ECO:0000256" key="1">
    <source>
        <dbReference type="SAM" id="MobiDB-lite"/>
    </source>
</evidence>
<evidence type="ECO:0000305" key="2"/>
<accession>Q96G42</accession>
<proteinExistence type="evidence at protein level"/>